<organism>
    <name type="scientific">Staphylococcus aureus (strain Newman)</name>
    <dbReference type="NCBI Taxonomy" id="426430"/>
    <lineage>
        <taxon>Bacteria</taxon>
        <taxon>Bacillati</taxon>
        <taxon>Bacillota</taxon>
        <taxon>Bacilli</taxon>
        <taxon>Bacillales</taxon>
        <taxon>Staphylococcaceae</taxon>
        <taxon>Staphylococcus</taxon>
    </lineage>
</organism>
<comment type="function">
    <text evidence="1">Bidirectionally degrades single-stranded DNA into large acid-insoluble oligonucleotides, which are then degraded further into small acid-soluble oligonucleotides.</text>
</comment>
<comment type="catalytic activity">
    <reaction evidence="1">
        <text>Exonucleolytic cleavage in either 5'- to 3'- or 3'- to 5'-direction to yield nucleoside 5'-phosphates.</text>
        <dbReference type="EC" id="3.1.11.6"/>
    </reaction>
</comment>
<comment type="subunit">
    <text evidence="1">Heterooligomer composed of large and small subunits.</text>
</comment>
<comment type="subcellular location">
    <subcellularLocation>
        <location evidence="1">Cytoplasm</location>
    </subcellularLocation>
</comment>
<comment type="similarity">
    <text evidence="1">Belongs to the XseA family.</text>
</comment>
<sequence length="445" mass="50894">MSDYLSVSALTKYIKYKFDQDPHLQSVLIKGELSNFKKHSSGHLYFNVKDKESVISAMMFKGSASKLNFEPKEGDEVLLEARVSVFERRGNYQIYVNKMQLDGIGNLYQKLEALKKKLTEEGCFDKANKKSIPKFPKKIAVLTASTGAAIRDIHSTINSRFPLAEQIQISTLVQGEKAKDDIIEKIEYADSLGVDTIIVGRGGGSIEDLWNFNEEAVVRAIYNCKTPIISAVGHETDFTLSDFAADIRAATPTQAAVIATPDQYELLQQIQQYQFTLTRFIKKHLEQQRKHVEHLSSYYKFKQPTLLYDQQIQRRDDLEKRLKQQIQATFEQQRHRLMLLQQRYNLKALLSSVNQEQQNNLQLTNQLVKLLNSKILSYKNDLKNKVENLNNLSPTNTMLRGYAIVNKKDEVITSTKDLTENDQLTLTMKDGLVDAKVTKVRCNND</sequence>
<name>EX7L_STAAE</name>
<dbReference type="EC" id="3.1.11.6" evidence="1"/>
<dbReference type="EMBL" id="AP009351">
    <property type="protein sequence ID" value="BAF67700.1"/>
    <property type="molecule type" value="Genomic_DNA"/>
</dbReference>
<dbReference type="RefSeq" id="WP_001286928.1">
    <property type="nucleotide sequence ID" value="NZ_JBBIAE010000001.1"/>
</dbReference>
<dbReference type="SMR" id="A6QH68"/>
<dbReference type="KEGG" id="sae:NWMN_1428"/>
<dbReference type="HOGENOM" id="CLU_023625_3_1_9"/>
<dbReference type="Proteomes" id="UP000006386">
    <property type="component" value="Chromosome"/>
</dbReference>
<dbReference type="GO" id="GO:0005737">
    <property type="term" value="C:cytoplasm"/>
    <property type="evidence" value="ECO:0007669"/>
    <property type="project" value="UniProtKB-SubCell"/>
</dbReference>
<dbReference type="GO" id="GO:0009318">
    <property type="term" value="C:exodeoxyribonuclease VII complex"/>
    <property type="evidence" value="ECO:0007669"/>
    <property type="project" value="InterPro"/>
</dbReference>
<dbReference type="GO" id="GO:0008855">
    <property type="term" value="F:exodeoxyribonuclease VII activity"/>
    <property type="evidence" value="ECO:0007669"/>
    <property type="project" value="UniProtKB-UniRule"/>
</dbReference>
<dbReference type="GO" id="GO:0003676">
    <property type="term" value="F:nucleic acid binding"/>
    <property type="evidence" value="ECO:0007669"/>
    <property type="project" value="InterPro"/>
</dbReference>
<dbReference type="GO" id="GO:0006308">
    <property type="term" value="P:DNA catabolic process"/>
    <property type="evidence" value="ECO:0007669"/>
    <property type="project" value="UniProtKB-UniRule"/>
</dbReference>
<dbReference type="CDD" id="cd04489">
    <property type="entry name" value="ExoVII_LU_OBF"/>
    <property type="match status" value="1"/>
</dbReference>
<dbReference type="HAMAP" id="MF_00378">
    <property type="entry name" value="Exonuc_7_L"/>
    <property type="match status" value="1"/>
</dbReference>
<dbReference type="InterPro" id="IPR003753">
    <property type="entry name" value="Exonuc_VII_L"/>
</dbReference>
<dbReference type="InterPro" id="IPR020579">
    <property type="entry name" value="Exonuc_VII_lsu_C"/>
</dbReference>
<dbReference type="InterPro" id="IPR025824">
    <property type="entry name" value="OB-fold_nuc-bd_dom"/>
</dbReference>
<dbReference type="NCBIfam" id="TIGR00237">
    <property type="entry name" value="xseA"/>
    <property type="match status" value="1"/>
</dbReference>
<dbReference type="PANTHER" id="PTHR30008">
    <property type="entry name" value="EXODEOXYRIBONUCLEASE 7 LARGE SUBUNIT"/>
    <property type="match status" value="1"/>
</dbReference>
<dbReference type="PANTHER" id="PTHR30008:SF0">
    <property type="entry name" value="EXODEOXYRIBONUCLEASE 7 LARGE SUBUNIT"/>
    <property type="match status" value="1"/>
</dbReference>
<dbReference type="Pfam" id="PF02601">
    <property type="entry name" value="Exonuc_VII_L"/>
    <property type="match status" value="1"/>
</dbReference>
<dbReference type="Pfam" id="PF13742">
    <property type="entry name" value="tRNA_anti_2"/>
    <property type="match status" value="1"/>
</dbReference>
<reference key="1">
    <citation type="journal article" date="2008" name="J. Bacteriol.">
        <title>Genome sequence of Staphylococcus aureus strain Newman and comparative analysis of staphylococcal genomes: polymorphism and evolution of two major pathogenicity islands.</title>
        <authorList>
            <person name="Baba T."/>
            <person name="Bae T."/>
            <person name="Schneewind O."/>
            <person name="Takeuchi F."/>
            <person name="Hiramatsu K."/>
        </authorList>
    </citation>
    <scope>NUCLEOTIDE SEQUENCE [LARGE SCALE GENOMIC DNA]</scope>
    <source>
        <strain>Newman</strain>
    </source>
</reference>
<protein>
    <recommendedName>
        <fullName evidence="1">Exodeoxyribonuclease 7 large subunit</fullName>
        <ecNumber evidence="1">3.1.11.6</ecNumber>
    </recommendedName>
    <alternativeName>
        <fullName evidence="1">Exodeoxyribonuclease VII large subunit</fullName>
        <shortName evidence="1">Exonuclease VII large subunit</shortName>
    </alternativeName>
</protein>
<evidence type="ECO:0000255" key="1">
    <source>
        <dbReference type="HAMAP-Rule" id="MF_00378"/>
    </source>
</evidence>
<feature type="chain" id="PRO_1000072163" description="Exodeoxyribonuclease 7 large subunit">
    <location>
        <begin position="1"/>
        <end position="445"/>
    </location>
</feature>
<accession>A6QH68</accession>
<keyword id="KW-0963">Cytoplasm</keyword>
<keyword id="KW-0269">Exonuclease</keyword>
<keyword id="KW-0378">Hydrolase</keyword>
<keyword id="KW-0540">Nuclease</keyword>
<proteinExistence type="inferred from homology"/>
<gene>
    <name evidence="1" type="primary">xseA</name>
    <name type="ordered locus">NWMN_1428</name>
</gene>